<accession>Q58350</accession>
<keyword id="KW-1185">Reference proteome</keyword>
<keyword id="KW-0677">Repeat</keyword>
<keyword id="KW-0802">TPR repeat</keyword>
<name>Y940_METJA</name>
<dbReference type="EMBL" id="L77117">
    <property type="protein sequence ID" value="AAB98944.1"/>
    <property type="molecule type" value="Genomic_DNA"/>
</dbReference>
<dbReference type="PIR" id="D64417">
    <property type="entry name" value="D64417"/>
</dbReference>
<dbReference type="RefSeq" id="WP_010870454.1">
    <property type="nucleotide sequence ID" value="NC_000909.1"/>
</dbReference>
<dbReference type="SMR" id="Q58350"/>
<dbReference type="STRING" id="243232.MJ_0940"/>
<dbReference type="PaxDb" id="243232-MJ_0940"/>
<dbReference type="EnsemblBacteria" id="AAB98944">
    <property type="protein sequence ID" value="AAB98944"/>
    <property type="gene ID" value="MJ_0940"/>
</dbReference>
<dbReference type="GeneID" id="1451836"/>
<dbReference type="KEGG" id="mja:MJ_0940"/>
<dbReference type="eggNOG" id="arCOG03038">
    <property type="taxonomic scope" value="Archaea"/>
</dbReference>
<dbReference type="HOGENOM" id="CLU_003728_2_5_2"/>
<dbReference type="InParanoid" id="Q58350"/>
<dbReference type="OrthoDB" id="115601at2157"/>
<dbReference type="PhylomeDB" id="Q58350"/>
<dbReference type="Proteomes" id="UP000000805">
    <property type="component" value="Chromosome"/>
</dbReference>
<dbReference type="Gene3D" id="1.25.40.10">
    <property type="entry name" value="Tetratricopeptide repeat domain"/>
    <property type="match status" value="3"/>
</dbReference>
<dbReference type="InterPro" id="IPR011990">
    <property type="entry name" value="TPR-like_helical_dom_sf"/>
</dbReference>
<dbReference type="InterPro" id="IPR019734">
    <property type="entry name" value="TPR_rpt"/>
</dbReference>
<dbReference type="PANTHER" id="PTHR12558">
    <property type="entry name" value="CELL DIVISION CYCLE 16,23,27"/>
    <property type="match status" value="1"/>
</dbReference>
<dbReference type="PANTHER" id="PTHR12558:SF13">
    <property type="entry name" value="CELL DIVISION CYCLE PROTEIN 27 HOMOLOG"/>
    <property type="match status" value="1"/>
</dbReference>
<dbReference type="Pfam" id="PF12895">
    <property type="entry name" value="ANAPC3"/>
    <property type="match status" value="1"/>
</dbReference>
<dbReference type="Pfam" id="PF00515">
    <property type="entry name" value="TPR_1"/>
    <property type="match status" value="2"/>
</dbReference>
<dbReference type="Pfam" id="PF13181">
    <property type="entry name" value="TPR_8"/>
    <property type="match status" value="1"/>
</dbReference>
<dbReference type="SMART" id="SM00028">
    <property type="entry name" value="TPR"/>
    <property type="match status" value="8"/>
</dbReference>
<dbReference type="SUPFAM" id="SSF48439">
    <property type="entry name" value="Protein prenylyltransferase"/>
    <property type="match status" value="1"/>
</dbReference>
<dbReference type="SUPFAM" id="SSF48452">
    <property type="entry name" value="TPR-like"/>
    <property type="match status" value="1"/>
</dbReference>
<dbReference type="PROSITE" id="PS50005">
    <property type="entry name" value="TPR"/>
    <property type="match status" value="7"/>
</dbReference>
<dbReference type="PROSITE" id="PS50293">
    <property type="entry name" value="TPR_REGION"/>
    <property type="match status" value="1"/>
</dbReference>
<feature type="chain" id="PRO_0000106458" description="TPR repeat-containing protein MJ0940">
    <location>
        <begin position="1"/>
        <end position="318"/>
    </location>
</feature>
<feature type="repeat" description="TPR 1">
    <location>
        <begin position="17"/>
        <end position="50"/>
    </location>
</feature>
<feature type="repeat" description="TPR 2">
    <location>
        <begin position="84"/>
        <end position="117"/>
    </location>
</feature>
<feature type="repeat" description="TPR 3">
    <location>
        <begin position="119"/>
        <end position="151"/>
    </location>
</feature>
<feature type="repeat" description="TPR 4">
    <location>
        <begin position="152"/>
        <end position="185"/>
    </location>
</feature>
<feature type="repeat" description="TPR 5">
    <location>
        <begin position="186"/>
        <end position="219"/>
    </location>
</feature>
<feature type="repeat" description="TPR 6">
    <location>
        <begin position="221"/>
        <end position="254"/>
    </location>
</feature>
<feature type="repeat" description="TPR 7">
    <location>
        <begin position="255"/>
        <end position="288"/>
    </location>
</feature>
<feature type="repeat" description="TPR 8">
    <location>
        <begin position="289"/>
        <end position="318"/>
    </location>
</feature>
<proteinExistence type="predicted"/>
<gene>
    <name type="ordered locus">MJ0940</name>
</gene>
<organism>
    <name type="scientific">Methanocaldococcus jannaschii (strain ATCC 43067 / DSM 2661 / JAL-1 / JCM 10045 / NBRC 100440)</name>
    <name type="common">Methanococcus jannaschii</name>
    <dbReference type="NCBI Taxonomy" id="243232"/>
    <lineage>
        <taxon>Archaea</taxon>
        <taxon>Methanobacteriati</taxon>
        <taxon>Methanobacteriota</taxon>
        <taxon>Methanomada group</taxon>
        <taxon>Methanococci</taxon>
        <taxon>Methanococcales</taxon>
        <taxon>Methanocaldococcaceae</taxon>
        <taxon>Methanocaldococcus</taxon>
    </lineage>
</organism>
<sequence length="318" mass="36861">MEIKNKKLKETSDVLLSLTYLIKSYEYRDRGNLLESLYYLDKALELNPDFKFAKFLKAISLAILGDINKSIECLEDITSNSNDPVAYALLGQLYELLGNFDNALECYEKSLGIEEKFATAFFLKVLCLGLSGKYDELLKCCDRLISFAPNFIPAYIIKANMLRKLGRYEEALACVNKVLELKENDTNAIYLKALILNRIGNCDEALKYYEKLIDELNVTWIEVIREAIYLSFLFNKLDKAEKYIEMGLKLRPDDASLWYFKGKLYEKQNKFEEALKYYNKAIQLMPHHTKALLAKARVLEKLGRIEESIECYNKALDR</sequence>
<protein>
    <recommendedName>
        <fullName>TPR repeat-containing protein MJ0940</fullName>
    </recommendedName>
</protein>
<reference key="1">
    <citation type="journal article" date="1996" name="Science">
        <title>Complete genome sequence of the methanogenic archaeon, Methanococcus jannaschii.</title>
        <authorList>
            <person name="Bult C.J."/>
            <person name="White O."/>
            <person name="Olsen G.J."/>
            <person name="Zhou L."/>
            <person name="Fleischmann R.D."/>
            <person name="Sutton G.G."/>
            <person name="Blake J.A."/>
            <person name="FitzGerald L.M."/>
            <person name="Clayton R.A."/>
            <person name="Gocayne J.D."/>
            <person name="Kerlavage A.R."/>
            <person name="Dougherty B.A."/>
            <person name="Tomb J.-F."/>
            <person name="Adams M.D."/>
            <person name="Reich C.I."/>
            <person name="Overbeek R."/>
            <person name="Kirkness E.F."/>
            <person name="Weinstock K.G."/>
            <person name="Merrick J.M."/>
            <person name="Glodek A."/>
            <person name="Scott J.L."/>
            <person name="Geoghagen N.S.M."/>
            <person name="Weidman J.F."/>
            <person name="Fuhrmann J.L."/>
            <person name="Nguyen D."/>
            <person name="Utterback T.R."/>
            <person name="Kelley J.M."/>
            <person name="Peterson J.D."/>
            <person name="Sadow P.W."/>
            <person name="Hanna M.C."/>
            <person name="Cotton M.D."/>
            <person name="Roberts K.M."/>
            <person name="Hurst M.A."/>
            <person name="Kaine B.P."/>
            <person name="Borodovsky M."/>
            <person name="Klenk H.-P."/>
            <person name="Fraser C.M."/>
            <person name="Smith H.O."/>
            <person name="Woese C.R."/>
            <person name="Venter J.C."/>
        </authorList>
    </citation>
    <scope>NUCLEOTIDE SEQUENCE [LARGE SCALE GENOMIC DNA]</scope>
    <source>
        <strain>ATCC 43067 / DSM 2661 / JAL-1 / JCM 10045 / NBRC 100440</strain>
    </source>
</reference>